<feature type="chain" id="PRO_1000082964" description="Uronate isomerase">
    <location>
        <begin position="1"/>
        <end position="468"/>
    </location>
</feature>
<name>UXAC_MARMS</name>
<reference key="1">
    <citation type="submission" date="2007-06" db="EMBL/GenBank/DDBJ databases">
        <title>Complete sequence of Marinomonas sp. MWYL1.</title>
        <authorList>
            <consortium name="US DOE Joint Genome Institute"/>
            <person name="Copeland A."/>
            <person name="Lucas S."/>
            <person name="Lapidus A."/>
            <person name="Barry K."/>
            <person name="Glavina del Rio T."/>
            <person name="Dalin E."/>
            <person name="Tice H."/>
            <person name="Pitluck S."/>
            <person name="Kiss H."/>
            <person name="Brettin T."/>
            <person name="Bruce D."/>
            <person name="Detter J.C."/>
            <person name="Han C."/>
            <person name="Schmutz J."/>
            <person name="Larimer F."/>
            <person name="Land M."/>
            <person name="Hauser L."/>
            <person name="Kyrpides N."/>
            <person name="Kim E."/>
            <person name="Johnston A.W.B."/>
            <person name="Todd J.D."/>
            <person name="Rogers R."/>
            <person name="Wexler M."/>
            <person name="Bond P.L."/>
            <person name="Li Y."/>
            <person name="Richardson P."/>
        </authorList>
    </citation>
    <scope>NUCLEOTIDE SEQUENCE [LARGE SCALE GENOMIC DNA]</scope>
    <source>
        <strain>MWYL1</strain>
    </source>
</reference>
<sequence length="468" mass="53159">MKNFMTEDFLLTTETAKRLYHEYAADQPIYDYHCHLSPQEIAENRRFTDLGEIWLEGDHYKWRAMRTAGIEERLVTGNASFKEKYQAWAKTVPQCIGNPIYHWTHLELRRPFGITDVLFSPKTADAIWDQCNEMLQQPEFSARGIMQQMKVKMVGTTDDPADSLEHHKFIANDNSFDIAVTPSWRPDRAFKVDHVGFKDYLNKLGKAADINITRFSDLIAALAQRLEVFDAHGCRSADHGIEIMRFANEPSETDLDAILTKRINEQALTELEIAQFSSAVQAWLGKQYAKKGWVMQLHIGARRNNSSRMFKLIGGDSGFDSMDDRAFAEPLSGFLNTLDQSDELPKTILYCLNPMHNEMLATMAGNFQGGGVAGKVQFGSGWWFNDQLDGMQRQLTSVAQMGLLSQFVGMLTDSRSFLSYTRHEYFRRLLCEMIGGWVERGEAPADMALLGEMVKGICAGNAKKYFGF</sequence>
<comment type="catalytic activity">
    <reaction evidence="1">
        <text>D-glucuronate = D-fructuronate</text>
        <dbReference type="Rhea" id="RHEA:13049"/>
        <dbReference type="ChEBI" id="CHEBI:58720"/>
        <dbReference type="ChEBI" id="CHEBI:59863"/>
        <dbReference type="EC" id="5.3.1.12"/>
    </reaction>
</comment>
<comment type="catalytic activity">
    <reaction evidence="1">
        <text>aldehydo-D-galacturonate = keto-D-tagaturonate</text>
        <dbReference type="Rhea" id="RHEA:27702"/>
        <dbReference type="ChEBI" id="CHEBI:12952"/>
        <dbReference type="ChEBI" id="CHEBI:17886"/>
        <dbReference type="EC" id="5.3.1.12"/>
    </reaction>
</comment>
<comment type="pathway">
    <text evidence="1">Carbohydrate metabolism; pentose and glucuronate interconversion.</text>
</comment>
<comment type="similarity">
    <text evidence="1">Belongs to the metallo-dependent hydrolases superfamily. Uronate isomerase family.</text>
</comment>
<dbReference type="EC" id="5.3.1.12" evidence="1"/>
<dbReference type="EMBL" id="CP000749">
    <property type="protein sequence ID" value="ABR71693.1"/>
    <property type="molecule type" value="Genomic_DNA"/>
</dbReference>
<dbReference type="SMR" id="A6VZ14"/>
<dbReference type="STRING" id="400668.Mmwyl1_2780"/>
<dbReference type="KEGG" id="mmw:Mmwyl1_2780"/>
<dbReference type="eggNOG" id="COG1904">
    <property type="taxonomic scope" value="Bacteria"/>
</dbReference>
<dbReference type="HOGENOM" id="CLU_044465_1_0_6"/>
<dbReference type="OrthoDB" id="9766564at2"/>
<dbReference type="UniPathway" id="UPA00246"/>
<dbReference type="GO" id="GO:0008880">
    <property type="term" value="F:glucuronate isomerase activity"/>
    <property type="evidence" value="ECO:0007669"/>
    <property type="project" value="UniProtKB-UniRule"/>
</dbReference>
<dbReference type="GO" id="GO:0019698">
    <property type="term" value="P:D-galacturonate catabolic process"/>
    <property type="evidence" value="ECO:0007669"/>
    <property type="project" value="TreeGrafter"/>
</dbReference>
<dbReference type="GO" id="GO:0042840">
    <property type="term" value="P:D-glucuronate catabolic process"/>
    <property type="evidence" value="ECO:0007669"/>
    <property type="project" value="TreeGrafter"/>
</dbReference>
<dbReference type="Gene3D" id="3.20.20.140">
    <property type="entry name" value="Metal-dependent hydrolases"/>
    <property type="match status" value="1"/>
</dbReference>
<dbReference type="Gene3D" id="1.10.2020.10">
    <property type="entry name" value="uronate isomerase, domain 2, chain A"/>
    <property type="match status" value="1"/>
</dbReference>
<dbReference type="HAMAP" id="MF_00675">
    <property type="entry name" value="UxaC"/>
    <property type="match status" value="1"/>
</dbReference>
<dbReference type="InterPro" id="IPR032466">
    <property type="entry name" value="Metal_Hydrolase"/>
</dbReference>
<dbReference type="InterPro" id="IPR003766">
    <property type="entry name" value="Uronate_isomerase"/>
</dbReference>
<dbReference type="NCBIfam" id="NF002794">
    <property type="entry name" value="PRK02925.1"/>
    <property type="match status" value="1"/>
</dbReference>
<dbReference type="PANTHER" id="PTHR30068">
    <property type="entry name" value="URONATE ISOMERASE"/>
    <property type="match status" value="1"/>
</dbReference>
<dbReference type="PANTHER" id="PTHR30068:SF4">
    <property type="entry name" value="URONATE ISOMERASE"/>
    <property type="match status" value="1"/>
</dbReference>
<dbReference type="Pfam" id="PF02614">
    <property type="entry name" value="UxaC"/>
    <property type="match status" value="1"/>
</dbReference>
<dbReference type="SUPFAM" id="SSF51556">
    <property type="entry name" value="Metallo-dependent hydrolases"/>
    <property type="match status" value="1"/>
</dbReference>
<organism>
    <name type="scientific">Marinomonas sp. (strain MWYL1)</name>
    <dbReference type="NCBI Taxonomy" id="400668"/>
    <lineage>
        <taxon>Bacteria</taxon>
        <taxon>Pseudomonadati</taxon>
        <taxon>Pseudomonadota</taxon>
        <taxon>Gammaproteobacteria</taxon>
        <taxon>Oceanospirillales</taxon>
        <taxon>Oceanospirillaceae</taxon>
        <taxon>Marinomonas</taxon>
    </lineage>
</organism>
<keyword id="KW-0413">Isomerase</keyword>
<protein>
    <recommendedName>
        <fullName evidence="1">Uronate isomerase</fullName>
        <ecNumber evidence="1">5.3.1.12</ecNumber>
    </recommendedName>
    <alternativeName>
        <fullName evidence="1">Glucuronate isomerase</fullName>
    </alternativeName>
    <alternativeName>
        <fullName evidence="1">Uronic isomerase</fullName>
    </alternativeName>
</protein>
<gene>
    <name evidence="1" type="primary">uxaC</name>
    <name type="ordered locus">Mmwyl1_2780</name>
</gene>
<evidence type="ECO:0000255" key="1">
    <source>
        <dbReference type="HAMAP-Rule" id="MF_00675"/>
    </source>
</evidence>
<accession>A6VZ14</accession>
<proteinExistence type="inferred from homology"/>